<accession>A5VKN9</accession>
<sequence>MEIEKNYRINSLFEFYQPLLTKKQNDYLELYYGDDYSLGEIAENFHVSRQAVYDNIKRTESILEDYEAKLHLYAEFQVRNQQADRIQRYVRENYPDDATLNHLVNHLESLEEE</sequence>
<feature type="chain" id="PRO_1000059001" description="UPF0122 protein Lreu_1156">
    <location>
        <begin position="1"/>
        <end position="113"/>
    </location>
</feature>
<evidence type="ECO:0000255" key="1">
    <source>
        <dbReference type="HAMAP-Rule" id="MF_00245"/>
    </source>
</evidence>
<protein>
    <recommendedName>
        <fullName evidence="1">UPF0122 protein Lreu_1156</fullName>
    </recommendedName>
</protein>
<name>Y1156_LIMRD</name>
<reference key="1">
    <citation type="journal article" date="2011" name="PLoS Genet.">
        <title>The evolution of host specialization in the vertebrate gut symbiont Lactobacillus reuteri.</title>
        <authorList>
            <person name="Frese S.A."/>
            <person name="Benson A.K."/>
            <person name="Tannock G.W."/>
            <person name="Loach D.M."/>
            <person name="Kim J."/>
            <person name="Zhang M."/>
            <person name="Oh P.L."/>
            <person name="Heng N.C."/>
            <person name="Patil P.B."/>
            <person name="Juge N."/>
            <person name="Mackenzie D.A."/>
            <person name="Pearson B.M."/>
            <person name="Lapidus A."/>
            <person name="Dalin E."/>
            <person name="Tice H."/>
            <person name="Goltsman E."/>
            <person name="Land M."/>
            <person name="Hauser L."/>
            <person name="Ivanova N."/>
            <person name="Kyrpides N.C."/>
            <person name="Walter J."/>
        </authorList>
    </citation>
    <scope>NUCLEOTIDE SEQUENCE [LARGE SCALE GENOMIC DNA]</scope>
    <source>
        <strain>DSM 20016</strain>
    </source>
</reference>
<comment type="function">
    <text evidence="1">Might take part in the signal recognition particle (SRP) pathway. This is inferred from the conservation of its genetic proximity to ftsY/ffh. May be a regulatory protein.</text>
</comment>
<comment type="similarity">
    <text evidence="1">Belongs to the UPF0122 family.</text>
</comment>
<organism>
    <name type="scientific">Limosilactobacillus reuteri (strain DSM 20016)</name>
    <name type="common">Lactobacillus reuteri</name>
    <dbReference type="NCBI Taxonomy" id="557436"/>
    <lineage>
        <taxon>Bacteria</taxon>
        <taxon>Bacillati</taxon>
        <taxon>Bacillota</taxon>
        <taxon>Bacilli</taxon>
        <taxon>Lactobacillales</taxon>
        <taxon>Lactobacillaceae</taxon>
        <taxon>Limosilactobacillus</taxon>
    </lineage>
</organism>
<gene>
    <name type="ordered locus">Lreu_1156</name>
</gene>
<keyword id="KW-1185">Reference proteome</keyword>
<dbReference type="EMBL" id="CP000705">
    <property type="protein sequence ID" value="ABQ83413.1"/>
    <property type="molecule type" value="Genomic_DNA"/>
</dbReference>
<dbReference type="RefSeq" id="WP_003663818.1">
    <property type="nucleotide sequence ID" value="NZ_AZDD01000001.1"/>
</dbReference>
<dbReference type="SMR" id="A5VKN9"/>
<dbReference type="STRING" id="557436.Lreu_1156"/>
<dbReference type="KEGG" id="lre:Lreu_1156"/>
<dbReference type="PATRIC" id="fig|557436.17.peg.22"/>
<dbReference type="eggNOG" id="COG2739">
    <property type="taxonomic scope" value="Bacteria"/>
</dbReference>
<dbReference type="HOGENOM" id="CLU_129218_1_0_9"/>
<dbReference type="Proteomes" id="UP000001991">
    <property type="component" value="Chromosome"/>
</dbReference>
<dbReference type="Gene3D" id="1.10.10.10">
    <property type="entry name" value="Winged helix-like DNA-binding domain superfamily/Winged helix DNA-binding domain"/>
    <property type="match status" value="1"/>
</dbReference>
<dbReference type="HAMAP" id="MF_00245">
    <property type="entry name" value="UPF0122"/>
    <property type="match status" value="1"/>
</dbReference>
<dbReference type="InterPro" id="IPR013324">
    <property type="entry name" value="RNA_pol_sigma_r3/r4-like"/>
</dbReference>
<dbReference type="InterPro" id="IPR007394">
    <property type="entry name" value="UPF0122"/>
</dbReference>
<dbReference type="InterPro" id="IPR054831">
    <property type="entry name" value="UPF0122_fam_protein"/>
</dbReference>
<dbReference type="InterPro" id="IPR036388">
    <property type="entry name" value="WH-like_DNA-bd_sf"/>
</dbReference>
<dbReference type="NCBIfam" id="NF001068">
    <property type="entry name" value="PRK00118.1-4"/>
    <property type="match status" value="1"/>
</dbReference>
<dbReference type="NCBIfam" id="NF001070">
    <property type="entry name" value="PRK00118.1-6"/>
    <property type="match status" value="1"/>
</dbReference>
<dbReference type="NCBIfam" id="NF045758">
    <property type="entry name" value="YlxM"/>
    <property type="match status" value="1"/>
</dbReference>
<dbReference type="PANTHER" id="PTHR40083">
    <property type="entry name" value="UPF0122 PROTEIN CBO2450/CLC_2298"/>
    <property type="match status" value="1"/>
</dbReference>
<dbReference type="PANTHER" id="PTHR40083:SF1">
    <property type="entry name" value="UPF0122 PROTEIN YLXM"/>
    <property type="match status" value="1"/>
</dbReference>
<dbReference type="Pfam" id="PF04297">
    <property type="entry name" value="UPF0122"/>
    <property type="match status" value="1"/>
</dbReference>
<dbReference type="SUPFAM" id="SSF88659">
    <property type="entry name" value="Sigma3 and sigma4 domains of RNA polymerase sigma factors"/>
    <property type="match status" value="1"/>
</dbReference>
<proteinExistence type="inferred from homology"/>